<keyword id="KW-0067">ATP-binding</keyword>
<keyword id="KW-0315">Glutamine amidotransferase</keyword>
<keyword id="KW-0436">Ligase</keyword>
<keyword id="KW-0460">Magnesium</keyword>
<keyword id="KW-0479">Metal-binding</keyword>
<keyword id="KW-0547">Nucleotide-binding</keyword>
<keyword id="KW-0665">Pyrimidine biosynthesis</keyword>
<sequence>MTKFVFVTGGVVSSLGKGIAAASLAAILESRGLKVTLLKLDPYINVDPGTMSPFQHGEVFVTEDGAETDLDLGHYERFVSAKMRKSNNFTTGQIYESVIRKERRGEYLGKTVQVIPHITNEIQAFIERGAAASHDGKADVALVEIGGTVGDIESLPFLEAARQMSLRMGRNRCAFVHLTLVPFIASAGELKTKPTQHSVQKLREIGISPTALLCRADRPIPDDERAKISLFANIPQDAVISVWDADSIYKIPQMLNEQGLDRLICEELRLDPKPADLSMWQKLVNAQENPEHEITIGMVGKYVDLTESYKSLIEALRHAGMHTATRVNIEYIDSEELESGHLEVLAPLDAILVPGGFGKRGTEGKIRAIQYARENKVPYLGICLGMQLAVIEFARHVAGMTDANSTEFNLETEHPVVALITEWVDREGKVEQRSAESDLGGTMRLGAQRVPVKEGTKAASIYGAEVNERHRHRYEVNNHYVPTLENAGMVISARTPTENLPEMMELPGSMHPWFVGVQFHPEFTSTPRDGHPLFKAYVEAALAGQQRKGA</sequence>
<gene>
    <name evidence="1" type="primary">pyrG</name>
    <name type="ordered locus">Reut_A1088</name>
</gene>
<dbReference type="EC" id="6.3.4.2" evidence="1"/>
<dbReference type="EMBL" id="CP000090">
    <property type="protein sequence ID" value="AAZ60466.1"/>
    <property type="molecule type" value="Genomic_DNA"/>
</dbReference>
<dbReference type="SMR" id="Q473G7"/>
<dbReference type="STRING" id="264198.Reut_A1088"/>
<dbReference type="KEGG" id="reu:Reut_A1088"/>
<dbReference type="eggNOG" id="COG0504">
    <property type="taxonomic scope" value="Bacteria"/>
</dbReference>
<dbReference type="HOGENOM" id="CLU_011675_5_0_4"/>
<dbReference type="OrthoDB" id="9801107at2"/>
<dbReference type="UniPathway" id="UPA00159">
    <property type="reaction ID" value="UER00277"/>
</dbReference>
<dbReference type="GO" id="GO:0005829">
    <property type="term" value="C:cytosol"/>
    <property type="evidence" value="ECO:0007669"/>
    <property type="project" value="TreeGrafter"/>
</dbReference>
<dbReference type="GO" id="GO:0005524">
    <property type="term" value="F:ATP binding"/>
    <property type="evidence" value="ECO:0007669"/>
    <property type="project" value="UniProtKB-KW"/>
</dbReference>
<dbReference type="GO" id="GO:0003883">
    <property type="term" value="F:CTP synthase activity"/>
    <property type="evidence" value="ECO:0007669"/>
    <property type="project" value="UniProtKB-UniRule"/>
</dbReference>
<dbReference type="GO" id="GO:0004359">
    <property type="term" value="F:glutaminase activity"/>
    <property type="evidence" value="ECO:0007669"/>
    <property type="project" value="RHEA"/>
</dbReference>
<dbReference type="GO" id="GO:0042802">
    <property type="term" value="F:identical protein binding"/>
    <property type="evidence" value="ECO:0007669"/>
    <property type="project" value="TreeGrafter"/>
</dbReference>
<dbReference type="GO" id="GO:0046872">
    <property type="term" value="F:metal ion binding"/>
    <property type="evidence" value="ECO:0007669"/>
    <property type="project" value="UniProtKB-KW"/>
</dbReference>
<dbReference type="GO" id="GO:0044210">
    <property type="term" value="P:'de novo' CTP biosynthetic process"/>
    <property type="evidence" value="ECO:0007669"/>
    <property type="project" value="UniProtKB-UniRule"/>
</dbReference>
<dbReference type="GO" id="GO:0019856">
    <property type="term" value="P:pyrimidine nucleobase biosynthetic process"/>
    <property type="evidence" value="ECO:0007669"/>
    <property type="project" value="TreeGrafter"/>
</dbReference>
<dbReference type="CDD" id="cd03113">
    <property type="entry name" value="CTPS_N"/>
    <property type="match status" value="1"/>
</dbReference>
<dbReference type="CDD" id="cd01746">
    <property type="entry name" value="GATase1_CTP_Synthase"/>
    <property type="match status" value="1"/>
</dbReference>
<dbReference type="FunFam" id="3.40.50.300:FF:000009">
    <property type="entry name" value="CTP synthase"/>
    <property type="match status" value="1"/>
</dbReference>
<dbReference type="FunFam" id="3.40.50.880:FF:000002">
    <property type="entry name" value="CTP synthase"/>
    <property type="match status" value="1"/>
</dbReference>
<dbReference type="Gene3D" id="3.40.50.880">
    <property type="match status" value="1"/>
</dbReference>
<dbReference type="Gene3D" id="3.40.50.300">
    <property type="entry name" value="P-loop containing nucleotide triphosphate hydrolases"/>
    <property type="match status" value="1"/>
</dbReference>
<dbReference type="HAMAP" id="MF_01227">
    <property type="entry name" value="PyrG"/>
    <property type="match status" value="1"/>
</dbReference>
<dbReference type="InterPro" id="IPR029062">
    <property type="entry name" value="Class_I_gatase-like"/>
</dbReference>
<dbReference type="InterPro" id="IPR004468">
    <property type="entry name" value="CTP_synthase"/>
</dbReference>
<dbReference type="InterPro" id="IPR017456">
    <property type="entry name" value="CTP_synthase_N"/>
</dbReference>
<dbReference type="InterPro" id="IPR017926">
    <property type="entry name" value="GATASE"/>
</dbReference>
<dbReference type="InterPro" id="IPR033828">
    <property type="entry name" value="GATase1_CTP_Synthase"/>
</dbReference>
<dbReference type="InterPro" id="IPR027417">
    <property type="entry name" value="P-loop_NTPase"/>
</dbReference>
<dbReference type="NCBIfam" id="NF003792">
    <property type="entry name" value="PRK05380.1"/>
    <property type="match status" value="1"/>
</dbReference>
<dbReference type="NCBIfam" id="TIGR00337">
    <property type="entry name" value="PyrG"/>
    <property type="match status" value="1"/>
</dbReference>
<dbReference type="PANTHER" id="PTHR11550">
    <property type="entry name" value="CTP SYNTHASE"/>
    <property type="match status" value="1"/>
</dbReference>
<dbReference type="PANTHER" id="PTHR11550:SF0">
    <property type="entry name" value="CTP SYNTHASE-RELATED"/>
    <property type="match status" value="1"/>
</dbReference>
<dbReference type="Pfam" id="PF06418">
    <property type="entry name" value="CTP_synth_N"/>
    <property type="match status" value="1"/>
</dbReference>
<dbReference type="Pfam" id="PF00117">
    <property type="entry name" value="GATase"/>
    <property type="match status" value="1"/>
</dbReference>
<dbReference type="SUPFAM" id="SSF52317">
    <property type="entry name" value="Class I glutamine amidotransferase-like"/>
    <property type="match status" value="1"/>
</dbReference>
<dbReference type="SUPFAM" id="SSF52540">
    <property type="entry name" value="P-loop containing nucleoside triphosphate hydrolases"/>
    <property type="match status" value="1"/>
</dbReference>
<dbReference type="PROSITE" id="PS51273">
    <property type="entry name" value="GATASE_TYPE_1"/>
    <property type="match status" value="1"/>
</dbReference>
<proteinExistence type="inferred from homology"/>
<comment type="function">
    <text evidence="1">Catalyzes the ATP-dependent amination of UTP to CTP with either L-glutamine or ammonia as the source of nitrogen. Regulates intracellular CTP levels through interactions with the four ribonucleotide triphosphates.</text>
</comment>
<comment type="catalytic activity">
    <reaction evidence="1">
        <text>UTP + L-glutamine + ATP + H2O = CTP + L-glutamate + ADP + phosphate + 2 H(+)</text>
        <dbReference type="Rhea" id="RHEA:26426"/>
        <dbReference type="ChEBI" id="CHEBI:15377"/>
        <dbReference type="ChEBI" id="CHEBI:15378"/>
        <dbReference type="ChEBI" id="CHEBI:29985"/>
        <dbReference type="ChEBI" id="CHEBI:30616"/>
        <dbReference type="ChEBI" id="CHEBI:37563"/>
        <dbReference type="ChEBI" id="CHEBI:43474"/>
        <dbReference type="ChEBI" id="CHEBI:46398"/>
        <dbReference type="ChEBI" id="CHEBI:58359"/>
        <dbReference type="ChEBI" id="CHEBI:456216"/>
        <dbReference type="EC" id="6.3.4.2"/>
    </reaction>
</comment>
<comment type="catalytic activity">
    <reaction evidence="1">
        <text>L-glutamine + H2O = L-glutamate + NH4(+)</text>
        <dbReference type="Rhea" id="RHEA:15889"/>
        <dbReference type="ChEBI" id="CHEBI:15377"/>
        <dbReference type="ChEBI" id="CHEBI:28938"/>
        <dbReference type="ChEBI" id="CHEBI:29985"/>
        <dbReference type="ChEBI" id="CHEBI:58359"/>
    </reaction>
</comment>
<comment type="catalytic activity">
    <reaction evidence="1">
        <text>UTP + NH4(+) + ATP = CTP + ADP + phosphate + 2 H(+)</text>
        <dbReference type="Rhea" id="RHEA:16597"/>
        <dbReference type="ChEBI" id="CHEBI:15378"/>
        <dbReference type="ChEBI" id="CHEBI:28938"/>
        <dbReference type="ChEBI" id="CHEBI:30616"/>
        <dbReference type="ChEBI" id="CHEBI:37563"/>
        <dbReference type="ChEBI" id="CHEBI:43474"/>
        <dbReference type="ChEBI" id="CHEBI:46398"/>
        <dbReference type="ChEBI" id="CHEBI:456216"/>
    </reaction>
</comment>
<comment type="activity regulation">
    <text evidence="1">Allosterically activated by GTP, when glutamine is the substrate; GTP has no effect on the reaction when ammonia is the substrate. The allosteric effector GTP functions by stabilizing the protein conformation that binds the tetrahedral intermediate(s) formed during glutamine hydrolysis. Inhibited by the product CTP, via allosteric rather than competitive inhibition.</text>
</comment>
<comment type="pathway">
    <text evidence="1">Pyrimidine metabolism; CTP biosynthesis via de novo pathway; CTP from UDP: step 2/2.</text>
</comment>
<comment type="subunit">
    <text evidence="1">Homotetramer.</text>
</comment>
<comment type="miscellaneous">
    <text evidence="1">CTPSs have evolved a hybrid strategy for distinguishing between UTP and CTP. The overlapping regions of the product feedback inhibitory and substrate sites recognize a common feature in both compounds, the triphosphate moiety. To differentiate isosteric substrate and product pyrimidine rings, an additional pocket far from the expected kinase/ligase catalytic site, specifically recognizes the cytosine and ribose portions of the product inhibitor.</text>
</comment>
<comment type="similarity">
    <text evidence="1">Belongs to the CTP synthase family.</text>
</comment>
<accession>Q473G7</accession>
<name>PYRG_CUPPJ</name>
<organism>
    <name type="scientific">Cupriavidus pinatubonensis (strain JMP 134 / LMG 1197)</name>
    <name type="common">Cupriavidus necator (strain JMP 134)</name>
    <dbReference type="NCBI Taxonomy" id="264198"/>
    <lineage>
        <taxon>Bacteria</taxon>
        <taxon>Pseudomonadati</taxon>
        <taxon>Pseudomonadota</taxon>
        <taxon>Betaproteobacteria</taxon>
        <taxon>Burkholderiales</taxon>
        <taxon>Burkholderiaceae</taxon>
        <taxon>Cupriavidus</taxon>
    </lineage>
</organism>
<evidence type="ECO:0000255" key="1">
    <source>
        <dbReference type="HAMAP-Rule" id="MF_01227"/>
    </source>
</evidence>
<feature type="chain" id="PRO_0000266191" description="CTP synthase">
    <location>
        <begin position="1"/>
        <end position="550"/>
    </location>
</feature>
<feature type="domain" description="Glutamine amidotransferase type-1" evidence="1">
    <location>
        <begin position="295"/>
        <end position="547"/>
    </location>
</feature>
<feature type="region of interest" description="Amidoligase domain" evidence="1">
    <location>
        <begin position="1"/>
        <end position="270"/>
    </location>
</feature>
<feature type="active site" description="Nucleophile; for glutamine hydrolysis" evidence="1">
    <location>
        <position position="383"/>
    </location>
</feature>
<feature type="active site" evidence="1">
    <location>
        <position position="520"/>
    </location>
</feature>
<feature type="active site" evidence="1">
    <location>
        <position position="522"/>
    </location>
</feature>
<feature type="binding site" evidence="1">
    <location>
        <position position="13"/>
    </location>
    <ligand>
        <name>CTP</name>
        <dbReference type="ChEBI" id="CHEBI:37563"/>
        <note>allosteric inhibitor</note>
    </ligand>
</feature>
<feature type="binding site" evidence="1">
    <location>
        <position position="13"/>
    </location>
    <ligand>
        <name>UTP</name>
        <dbReference type="ChEBI" id="CHEBI:46398"/>
    </ligand>
</feature>
<feature type="binding site" evidence="1">
    <location>
        <begin position="14"/>
        <end position="19"/>
    </location>
    <ligand>
        <name>ATP</name>
        <dbReference type="ChEBI" id="CHEBI:30616"/>
    </ligand>
</feature>
<feature type="binding site" evidence="1">
    <location>
        <position position="71"/>
    </location>
    <ligand>
        <name>ATP</name>
        <dbReference type="ChEBI" id="CHEBI:30616"/>
    </ligand>
</feature>
<feature type="binding site" evidence="1">
    <location>
        <position position="71"/>
    </location>
    <ligand>
        <name>Mg(2+)</name>
        <dbReference type="ChEBI" id="CHEBI:18420"/>
    </ligand>
</feature>
<feature type="binding site" evidence="1">
    <location>
        <position position="144"/>
    </location>
    <ligand>
        <name>Mg(2+)</name>
        <dbReference type="ChEBI" id="CHEBI:18420"/>
    </ligand>
</feature>
<feature type="binding site" evidence="1">
    <location>
        <begin position="151"/>
        <end position="153"/>
    </location>
    <ligand>
        <name>CTP</name>
        <dbReference type="ChEBI" id="CHEBI:37563"/>
        <note>allosteric inhibitor</note>
    </ligand>
</feature>
<feature type="binding site" evidence="1">
    <location>
        <begin position="191"/>
        <end position="196"/>
    </location>
    <ligand>
        <name>CTP</name>
        <dbReference type="ChEBI" id="CHEBI:37563"/>
        <note>allosteric inhibitor</note>
    </ligand>
</feature>
<feature type="binding site" evidence="1">
    <location>
        <begin position="191"/>
        <end position="196"/>
    </location>
    <ligand>
        <name>UTP</name>
        <dbReference type="ChEBI" id="CHEBI:46398"/>
    </ligand>
</feature>
<feature type="binding site" evidence="1">
    <location>
        <position position="227"/>
    </location>
    <ligand>
        <name>CTP</name>
        <dbReference type="ChEBI" id="CHEBI:37563"/>
        <note>allosteric inhibitor</note>
    </ligand>
</feature>
<feature type="binding site" evidence="1">
    <location>
        <position position="227"/>
    </location>
    <ligand>
        <name>UTP</name>
        <dbReference type="ChEBI" id="CHEBI:46398"/>
    </ligand>
</feature>
<feature type="binding site" evidence="1">
    <location>
        <position position="356"/>
    </location>
    <ligand>
        <name>L-glutamine</name>
        <dbReference type="ChEBI" id="CHEBI:58359"/>
    </ligand>
</feature>
<feature type="binding site" evidence="1">
    <location>
        <begin position="384"/>
        <end position="387"/>
    </location>
    <ligand>
        <name>L-glutamine</name>
        <dbReference type="ChEBI" id="CHEBI:58359"/>
    </ligand>
</feature>
<feature type="binding site" evidence="1">
    <location>
        <position position="407"/>
    </location>
    <ligand>
        <name>L-glutamine</name>
        <dbReference type="ChEBI" id="CHEBI:58359"/>
    </ligand>
</feature>
<feature type="binding site" evidence="1">
    <location>
        <position position="473"/>
    </location>
    <ligand>
        <name>L-glutamine</name>
        <dbReference type="ChEBI" id="CHEBI:58359"/>
    </ligand>
</feature>
<reference key="1">
    <citation type="journal article" date="2010" name="PLoS ONE">
        <title>The complete multipartite genome sequence of Cupriavidus necator JMP134, a versatile pollutant degrader.</title>
        <authorList>
            <person name="Lykidis A."/>
            <person name="Perez-Pantoja D."/>
            <person name="Ledger T."/>
            <person name="Mavromatis K."/>
            <person name="Anderson I.J."/>
            <person name="Ivanova N.N."/>
            <person name="Hooper S.D."/>
            <person name="Lapidus A."/>
            <person name="Lucas S."/>
            <person name="Gonzalez B."/>
            <person name="Kyrpides N.C."/>
        </authorList>
    </citation>
    <scope>NUCLEOTIDE SEQUENCE [LARGE SCALE GENOMIC DNA]</scope>
    <source>
        <strain>JMP134 / LMG 1197</strain>
    </source>
</reference>
<protein>
    <recommendedName>
        <fullName evidence="1">CTP synthase</fullName>
        <ecNumber evidence="1">6.3.4.2</ecNumber>
    </recommendedName>
    <alternativeName>
        <fullName evidence="1">Cytidine 5'-triphosphate synthase</fullName>
    </alternativeName>
    <alternativeName>
        <fullName evidence="1">Cytidine triphosphate synthetase</fullName>
        <shortName evidence="1">CTP synthetase</shortName>
        <shortName evidence="1">CTPS</shortName>
    </alternativeName>
    <alternativeName>
        <fullName evidence="1">UTP--ammonia ligase</fullName>
    </alternativeName>
</protein>